<protein>
    <recommendedName>
        <fullName>Virion-associated protein</fullName>
        <shortName>Vap</shortName>
    </recommendedName>
    <alternativeName>
        <fullName>Protein 3</fullName>
        <shortName>P3</shortName>
    </alternativeName>
</protein>
<organism>
    <name type="scientific">Cauliflower mosaic virus (strain D/H)</name>
    <name type="common">CaMV</name>
    <dbReference type="NCBI Taxonomy" id="10645"/>
    <lineage>
        <taxon>Viruses</taxon>
        <taxon>Riboviria</taxon>
        <taxon>Pararnavirae</taxon>
        <taxon>Artverviricota</taxon>
        <taxon>Revtraviricetes</taxon>
        <taxon>Ortervirales</taxon>
        <taxon>Caulimoviridae</taxon>
        <taxon>Caulimovirus</taxon>
        <taxon>Caulimovirus tessellobrassicae</taxon>
    </lineage>
</organism>
<reference key="1">
    <citation type="journal article" date="1982" name="Gene">
        <title>Nucleotide sequence of DNA from an altered-virulence isolate D/H of the cauliflower mosaic virus.</title>
        <authorList>
            <person name="Balazs E."/>
            <person name="Guilley H."/>
            <person name="Jonard G."/>
            <person name="Richards K."/>
        </authorList>
    </citation>
    <scope>NUCLEOTIDE SEQUENCE [GENOMIC DNA]</scope>
</reference>
<feature type="chain" id="PRO_0000222077" description="Virion-associated protein">
    <location>
        <begin position="1"/>
        <end position="129"/>
    </location>
</feature>
<feature type="region of interest" description="Capsid binding" evidence="1">
    <location>
        <begin position="122"/>
        <end position="129"/>
    </location>
</feature>
<feature type="coiled-coil region" evidence="1">
    <location>
        <begin position="1"/>
        <end position="31"/>
    </location>
</feature>
<feature type="coiled-coil region" evidence="1">
    <location>
        <begin position="38"/>
        <end position="59"/>
    </location>
</feature>
<feature type="disulfide bond" description="Interchain (with C-62 in multimeric partner 1)" evidence="1">
    <location>
        <position position="60"/>
    </location>
</feature>
<feature type="disulfide bond" description="Interchain (with C-60 in multimeric partner 2)" evidence="1">
    <location>
        <position position="62"/>
    </location>
</feature>
<name>VAP_CAMVD</name>
<gene>
    <name type="ORF">ORF III</name>
</gene>
<keyword id="KW-0175">Coiled coil</keyword>
<keyword id="KW-1015">Disulfide bond</keyword>
<keyword id="KW-1031">Host cell junction</keyword>
<keyword id="KW-0946">Virion</keyword>
<proteinExistence type="inferred from homology"/>
<sequence length="129" mass="14110">MANLNQIQKEVSEILSDQKSMKADIKAILELLGSQNPIKESLETVAAKIVNDLTKLINDCPCNKEILEALGNQPKEQLIGQPKEKGKGLNLGKYSYPNYGVGNEELGSSGNPKALTWPFKAPAGWPNQY</sequence>
<comment type="function">
    <text evidence="1">Plays a role in virus cell-to-cell and plant-to-plant transmission. Interacts with virion icosahedral capsid and movement protein, thereby facilitating virion cell-to-cell transmission through plasmodesmata opened by viral movement protein. Also interacts with aphid transmission factor, attaching the virion to aphid stylet when the animal feeds on an virus infected plant. Aphid saliva may later detach the virion, inducing release of infectious particles when the animal feeds on a new plant (By similarity).</text>
</comment>
<comment type="subunit">
    <text evidence="1">Homotetramer, through coiled-coil domain. Homotrimer when interacts with icosehadral capsid. Interacts with capsid protein, and with Movement protein (By similarity).</text>
</comment>
<comment type="subcellular location">
    <subcellularLocation>
        <location evidence="1">Virion</location>
    </subcellularLocation>
    <subcellularLocation>
        <location>Host cell junction</location>
        <location>Host plasmodesma</location>
    </subcellularLocation>
</comment>
<comment type="similarity">
    <text evidence="2">Belongs to the caulimovirus ORF III family.</text>
</comment>
<accession>P03553</accession>
<organismHost>
    <name type="scientific">Arabidopsis thaliana</name>
    <name type="common">Mouse-ear cress</name>
    <dbReference type="NCBI Taxonomy" id="3702"/>
</organismHost>
<organismHost>
    <name type="scientific">Brassica</name>
    <dbReference type="NCBI Taxonomy" id="3705"/>
</organismHost>
<organismHost>
    <name type="scientific">Raphanus</name>
    <dbReference type="NCBI Taxonomy" id="3725"/>
</organismHost>
<evidence type="ECO:0000250" key="1"/>
<evidence type="ECO:0000305" key="2"/>
<dbReference type="EMBL" id="M10376">
    <property type="protein sequence ID" value="AAA46347.1"/>
    <property type="molecule type" value="Genomic_DNA"/>
</dbReference>
<dbReference type="SMR" id="P03553"/>
<dbReference type="Proteomes" id="UP000008439">
    <property type="component" value="Genome"/>
</dbReference>
<dbReference type="GO" id="GO:0044219">
    <property type="term" value="C:host cell plasmodesma"/>
    <property type="evidence" value="ECO:0007669"/>
    <property type="project" value="UniProtKB-SubCell"/>
</dbReference>
<dbReference type="GO" id="GO:0044423">
    <property type="term" value="C:virion component"/>
    <property type="evidence" value="ECO:0007669"/>
    <property type="project" value="UniProtKB-KW"/>
</dbReference>
<dbReference type="GO" id="GO:0003677">
    <property type="term" value="F:DNA binding"/>
    <property type="evidence" value="ECO:0007669"/>
    <property type="project" value="InterPro"/>
</dbReference>
<dbReference type="Gene3D" id="6.10.250.630">
    <property type="match status" value="1"/>
</dbReference>
<dbReference type="InterPro" id="IPR004986">
    <property type="entry name" value="Caulimo_virion-assoc"/>
</dbReference>
<dbReference type="Pfam" id="PF03310">
    <property type="entry name" value="Cauli_DNA-bind"/>
    <property type="match status" value="1"/>
</dbReference>